<sequence length="171" mass="19925">MAKFVIRPATAADCSDILRLIKELAKYEYMEEQVMLTEKDLLEDGFGEHPFYHCLVAEVPKEHLTPEGHSIVGFAMYYFTYDPWIGKLLYLEDFFVMSDYRGFGIGSEILKKLSQVAMKCRCSSMHFLVAEWNEPSINFYKRRGASDLSSEEGWRLFKIDKEYLLKMAAEE</sequence>
<organism>
    <name type="scientific">Bos taurus</name>
    <name type="common">Bovine</name>
    <dbReference type="NCBI Taxonomy" id="9913"/>
    <lineage>
        <taxon>Eukaryota</taxon>
        <taxon>Metazoa</taxon>
        <taxon>Chordata</taxon>
        <taxon>Craniata</taxon>
        <taxon>Vertebrata</taxon>
        <taxon>Euteleostomi</taxon>
        <taxon>Mammalia</taxon>
        <taxon>Eutheria</taxon>
        <taxon>Laurasiatheria</taxon>
        <taxon>Artiodactyla</taxon>
        <taxon>Ruminantia</taxon>
        <taxon>Pecora</taxon>
        <taxon>Bovidae</taxon>
        <taxon>Bovinae</taxon>
        <taxon>Bos</taxon>
    </lineage>
</organism>
<dbReference type="EC" id="2.3.1.57" evidence="2"/>
<dbReference type="EMBL" id="BC102304">
    <property type="protein sequence ID" value="AAI02305.1"/>
    <property type="molecule type" value="mRNA"/>
</dbReference>
<dbReference type="RefSeq" id="NP_001029505.1">
    <property type="nucleotide sequence ID" value="NM_001034333.2"/>
</dbReference>
<dbReference type="SMR" id="Q3T0Q0"/>
<dbReference type="FunCoup" id="Q3T0Q0">
    <property type="interactions" value="818"/>
</dbReference>
<dbReference type="STRING" id="9913.ENSBTAP00000023087"/>
<dbReference type="PaxDb" id="9913-ENSBTAP00000023087"/>
<dbReference type="Ensembl" id="ENSBTAT00000023087.4">
    <property type="protein sequence ID" value="ENSBTAP00000023087.2"/>
    <property type="gene ID" value="ENSBTAG00000017363.4"/>
</dbReference>
<dbReference type="GeneID" id="508861"/>
<dbReference type="KEGG" id="bta:508861"/>
<dbReference type="CTD" id="6303"/>
<dbReference type="VEuPathDB" id="HostDB:ENSBTAG00000017363"/>
<dbReference type="VGNC" id="VGNC:34296">
    <property type="gene designation" value="SAT1"/>
</dbReference>
<dbReference type="eggNOG" id="KOG3216">
    <property type="taxonomic scope" value="Eukaryota"/>
</dbReference>
<dbReference type="GeneTree" id="ENSGT00950000183121"/>
<dbReference type="HOGENOM" id="CLU_013985_41_1_1"/>
<dbReference type="InParanoid" id="Q3T0Q0"/>
<dbReference type="OMA" id="IAVKCRC"/>
<dbReference type="OrthoDB" id="7305308at2759"/>
<dbReference type="TreeFam" id="TF319736"/>
<dbReference type="Reactome" id="R-BTA-351200">
    <property type="pathway name" value="Interconversion of polyamines"/>
</dbReference>
<dbReference type="UniPathway" id="UPA00188">
    <property type="reaction ID" value="UER00363"/>
</dbReference>
<dbReference type="Proteomes" id="UP000009136">
    <property type="component" value="Chromosome X"/>
</dbReference>
<dbReference type="Bgee" id="ENSBTAG00000017363">
    <property type="expression patterns" value="Expressed in diaphragm and 104 other cell types or tissues"/>
</dbReference>
<dbReference type="GO" id="GO:0005829">
    <property type="term" value="C:cytosol"/>
    <property type="evidence" value="ECO:0007669"/>
    <property type="project" value="UniProtKB-SubCell"/>
</dbReference>
<dbReference type="GO" id="GO:0004145">
    <property type="term" value="F:diamine N-acetyltransferase activity"/>
    <property type="evidence" value="ECO:0000250"/>
    <property type="project" value="UniProtKB"/>
</dbReference>
<dbReference type="GO" id="GO:0042802">
    <property type="term" value="F:identical protein binding"/>
    <property type="evidence" value="ECO:0007669"/>
    <property type="project" value="Ensembl"/>
</dbReference>
<dbReference type="GO" id="GO:0008080">
    <property type="term" value="F:N-acetyltransferase activity"/>
    <property type="evidence" value="ECO:0000250"/>
    <property type="project" value="UniProtKB"/>
</dbReference>
<dbReference type="GO" id="GO:0019809">
    <property type="term" value="F:spermidine binding"/>
    <property type="evidence" value="ECO:0000318"/>
    <property type="project" value="GO_Central"/>
</dbReference>
<dbReference type="GO" id="GO:0001525">
    <property type="term" value="P:angiogenesis"/>
    <property type="evidence" value="ECO:0007669"/>
    <property type="project" value="Ensembl"/>
</dbReference>
<dbReference type="GO" id="GO:0006596">
    <property type="term" value="P:polyamine biosynthetic process"/>
    <property type="evidence" value="ECO:0000250"/>
    <property type="project" value="UniProtKB"/>
</dbReference>
<dbReference type="GO" id="GO:0009447">
    <property type="term" value="P:putrescine catabolic process"/>
    <property type="evidence" value="ECO:0007669"/>
    <property type="project" value="UniProtKB-UniPathway"/>
</dbReference>
<dbReference type="GO" id="GO:0032918">
    <property type="term" value="P:spermidine acetylation"/>
    <property type="evidence" value="ECO:0000250"/>
    <property type="project" value="UniProtKB"/>
</dbReference>
<dbReference type="CDD" id="cd04301">
    <property type="entry name" value="NAT_SF"/>
    <property type="match status" value="1"/>
</dbReference>
<dbReference type="FunFam" id="3.40.630.30:FF:000011">
    <property type="entry name" value="Diamine acetyltransferase 1"/>
    <property type="match status" value="1"/>
</dbReference>
<dbReference type="Gene3D" id="3.40.630.30">
    <property type="match status" value="1"/>
</dbReference>
<dbReference type="InterPro" id="IPR016181">
    <property type="entry name" value="Acyl_CoA_acyltransferase"/>
</dbReference>
<dbReference type="InterPro" id="IPR051016">
    <property type="entry name" value="Diverse_Substrate_AcTransf"/>
</dbReference>
<dbReference type="InterPro" id="IPR000182">
    <property type="entry name" value="GNAT_dom"/>
</dbReference>
<dbReference type="PANTHER" id="PTHR10545:SF36">
    <property type="entry name" value="DIAMINE ACETYLTRANSFERASE 1"/>
    <property type="match status" value="1"/>
</dbReference>
<dbReference type="PANTHER" id="PTHR10545">
    <property type="entry name" value="DIAMINE N-ACETYLTRANSFERASE"/>
    <property type="match status" value="1"/>
</dbReference>
<dbReference type="Pfam" id="PF00583">
    <property type="entry name" value="Acetyltransf_1"/>
    <property type="match status" value="1"/>
</dbReference>
<dbReference type="SUPFAM" id="SSF55729">
    <property type="entry name" value="Acyl-CoA N-acyltransferases (Nat)"/>
    <property type="match status" value="1"/>
</dbReference>
<dbReference type="PROSITE" id="PS51186">
    <property type="entry name" value="GNAT"/>
    <property type="match status" value="1"/>
</dbReference>
<feature type="chain" id="PRO_0000244026" description="Diamine acetyltransferase 1">
    <location>
        <begin position="1"/>
        <end position="171"/>
    </location>
</feature>
<feature type="domain" description="N-acetyltransferase" evidence="3">
    <location>
        <begin position="4"/>
        <end position="170"/>
    </location>
</feature>
<feature type="active site" description="Proton donor" evidence="1">
    <location>
        <position position="140"/>
    </location>
</feature>
<feature type="binding site" evidence="2">
    <location>
        <begin position="27"/>
        <end position="28"/>
    </location>
    <ligand>
        <name>substrate</name>
    </ligand>
</feature>
<feature type="binding site" evidence="2">
    <location>
        <position position="92"/>
    </location>
    <ligand>
        <name>substrate</name>
    </ligand>
</feature>
<feature type="binding site" evidence="2">
    <location>
        <begin position="94"/>
        <end position="96"/>
    </location>
    <ligand>
        <name>acetyl-CoA</name>
        <dbReference type="ChEBI" id="CHEBI:57288"/>
    </ligand>
</feature>
<feature type="binding site" evidence="2">
    <location>
        <begin position="102"/>
        <end position="107"/>
    </location>
    <ligand>
        <name>acetyl-CoA</name>
        <dbReference type="ChEBI" id="CHEBI:57288"/>
    </ligand>
</feature>
<feature type="binding site" evidence="2">
    <location>
        <begin position="126"/>
        <end position="128"/>
    </location>
    <ligand>
        <name>substrate</name>
    </ligand>
</feature>
<feature type="binding site" evidence="2">
    <location>
        <begin position="133"/>
        <end position="136"/>
    </location>
    <ligand>
        <name>acetyl-CoA</name>
        <dbReference type="ChEBI" id="CHEBI:57288"/>
    </ligand>
</feature>
<feature type="binding site" evidence="2">
    <location>
        <begin position="140"/>
        <end position="143"/>
    </location>
    <ligand>
        <name>acetyl-CoA</name>
        <dbReference type="ChEBI" id="CHEBI:57288"/>
    </ligand>
</feature>
<feature type="binding site" evidence="2">
    <location>
        <position position="152"/>
    </location>
    <ligand>
        <name>substrate</name>
    </ligand>
</feature>
<keyword id="KW-0012">Acyltransferase</keyword>
<keyword id="KW-0963">Cytoplasm</keyword>
<keyword id="KW-1185">Reference proteome</keyword>
<keyword id="KW-0808">Transferase</keyword>
<evidence type="ECO:0000250" key="1">
    <source>
        <dbReference type="UniProtKB" id="P0A951"/>
    </source>
</evidence>
<evidence type="ECO:0000250" key="2">
    <source>
        <dbReference type="UniProtKB" id="P21673"/>
    </source>
</evidence>
<evidence type="ECO:0000255" key="3">
    <source>
        <dbReference type="PROSITE-ProRule" id="PRU00532"/>
    </source>
</evidence>
<evidence type="ECO:0000305" key="4"/>
<name>SAT1_BOVIN</name>
<protein>
    <recommendedName>
        <fullName>Diamine acetyltransferase 1</fullName>
        <ecNumber evidence="2">2.3.1.57</ecNumber>
    </recommendedName>
    <alternativeName>
        <fullName>Polyamine N-acetyltransferase 1</fullName>
    </alternativeName>
    <alternativeName>
        <fullName>Putrescine acetyltransferase</fullName>
    </alternativeName>
    <alternativeName>
        <fullName>Spermidine/spermine N(1)-acetyltransferase 1</fullName>
        <shortName>SSAT</shortName>
        <shortName>SSAT-1</shortName>
    </alternativeName>
</protein>
<comment type="function">
    <text evidence="2">Enzyme which catalyzes the acetylation of polyamines. Substrate specificity: norspermidine = spermidine &gt;&gt; spermine &gt; N(1)-acetylspermine. This highly regulated enzyme allows a fine attenuation of the intracellular concentration of polyamines. Also involved in the regulation of polyamine transport out of cells. Also acts on 1,3-diaminopropane and 1,5-diaminopentane.</text>
</comment>
<comment type="catalytic activity">
    <reaction evidence="2">
        <text>an alkane-alpha,omega-diamine + acetyl-CoA = an N-acetylalkane-alpha,omega-diamine + CoA + H(+)</text>
        <dbReference type="Rhea" id="RHEA:11116"/>
        <dbReference type="Rhea" id="RHEA-COMP:9766"/>
        <dbReference type="Rhea" id="RHEA-COMP:9767"/>
        <dbReference type="ChEBI" id="CHEBI:15378"/>
        <dbReference type="ChEBI" id="CHEBI:57287"/>
        <dbReference type="ChEBI" id="CHEBI:57288"/>
        <dbReference type="ChEBI" id="CHEBI:70977"/>
        <dbReference type="ChEBI" id="CHEBI:70988"/>
        <dbReference type="EC" id="2.3.1.57"/>
    </reaction>
    <physiologicalReaction direction="left-to-right" evidence="2">
        <dbReference type="Rhea" id="RHEA:11117"/>
    </physiologicalReaction>
</comment>
<comment type="catalytic activity">
    <reaction evidence="2">
        <text>spermidine + acetyl-CoA = N(1)-acetylspermidine + CoA + H(+)</text>
        <dbReference type="Rhea" id="RHEA:28150"/>
        <dbReference type="ChEBI" id="CHEBI:15378"/>
        <dbReference type="ChEBI" id="CHEBI:57287"/>
        <dbReference type="ChEBI" id="CHEBI:57288"/>
        <dbReference type="ChEBI" id="CHEBI:57834"/>
        <dbReference type="ChEBI" id="CHEBI:58324"/>
        <dbReference type="EC" id="2.3.1.57"/>
    </reaction>
    <physiologicalReaction direction="left-to-right" evidence="2">
        <dbReference type="Rhea" id="RHEA:28151"/>
    </physiologicalReaction>
</comment>
<comment type="catalytic activity">
    <reaction evidence="2">
        <text>spermine + acetyl-CoA = N(1)-acetylspermine + CoA + H(+)</text>
        <dbReference type="Rhea" id="RHEA:33099"/>
        <dbReference type="ChEBI" id="CHEBI:15378"/>
        <dbReference type="ChEBI" id="CHEBI:45725"/>
        <dbReference type="ChEBI" id="CHEBI:57287"/>
        <dbReference type="ChEBI" id="CHEBI:57288"/>
        <dbReference type="ChEBI" id="CHEBI:58101"/>
        <dbReference type="EC" id="2.3.1.57"/>
    </reaction>
    <physiologicalReaction direction="left-to-right" evidence="2">
        <dbReference type="Rhea" id="RHEA:33100"/>
    </physiologicalReaction>
</comment>
<comment type="pathway">
    <text evidence="2">Amine and polyamine degradation; putrescine degradation; N-acetylputrescine from putrescine: step 1/1.</text>
</comment>
<comment type="subunit">
    <text evidence="2">Homodimer.</text>
</comment>
<comment type="subcellular location">
    <subcellularLocation>
        <location evidence="2">Cytoplasm</location>
        <location evidence="2">Cytosol</location>
    </subcellularLocation>
</comment>
<comment type="similarity">
    <text evidence="4">Belongs to the acetyltransferase family.</text>
</comment>
<accession>Q3T0Q0</accession>
<proteinExistence type="evidence at transcript level"/>
<gene>
    <name type="primary">SAT1</name>
    <name type="synonym">SAT</name>
</gene>
<reference key="1">
    <citation type="submission" date="2005-08" db="EMBL/GenBank/DDBJ databases">
        <authorList>
            <consortium name="NIH - Mammalian Gene Collection (MGC) project"/>
        </authorList>
    </citation>
    <scope>NUCLEOTIDE SEQUENCE [LARGE SCALE MRNA]</scope>
    <source>
        <strain>Crossbred X Angus</strain>
        <tissue>Ileum</tissue>
    </source>
</reference>